<dbReference type="EC" id="3.8.1.5"/>
<dbReference type="EMBL" id="AE000516">
    <property type="protein sequence ID" value="AAK46153.1"/>
    <property type="molecule type" value="Genomic_DNA"/>
</dbReference>
<dbReference type="PIR" id="B70722">
    <property type="entry name" value="B70722"/>
</dbReference>
<dbReference type="RefSeq" id="WP_003409254.1">
    <property type="nucleotide sequence ID" value="NZ_KK341227.1"/>
</dbReference>
<dbReference type="SMR" id="P9WMS0"/>
<dbReference type="ESTHER" id="myctu-Rv1833c">
    <property type="family name" value="Haloalkane_dehalogenase-HLD1"/>
</dbReference>
<dbReference type="KEGG" id="mtc:MT1881"/>
<dbReference type="PATRIC" id="fig|83331.31.peg.2025"/>
<dbReference type="HOGENOM" id="CLU_020336_13_3_11"/>
<dbReference type="Proteomes" id="UP000001020">
    <property type="component" value="Chromosome"/>
</dbReference>
<dbReference type="GO" id="GO:0004301">
    <property type="term" value="F:epoxide hydrolase activity"/>
    <property type="evidence" value="ECO:0007669"/>
    <property type="project" value="TreeGrafter"/>
</dbReference>
<dbReference type="GO" id="GO:0018786">
    <property type="term" value="F:haloalkane dehalogenase activity"/>
    <property type="evidence" value="ECO:0007669"/>
    <property type="project" value="UniProtKB-UniRule"/>
</dbReference>
<dbReference type="Gene3D" id="3.40.50.1820">
    <property type="entry name" value="alpha/beta hydrolase"/>
    <property type="match status" value="1"/>
</dbReference>
<dbReference type="HAMAP" id="MF_01230">
    <property type="entry name" value="Haloalk_dehal_type1"/>
    <property type="match status" value="1"/>
</dbReference>
<dbReference type="InterPro" id="IPR000073">
    <property type="entry name" value="AB_hydrolase_1"/>
</dbReference>
<dbReference type="InterPro" id="IPR029058">
    <property type="entry name" value="AB_hydrolase_fold"/>
</dbReference>
<dbReference type="InterPro" id="IPR000639">
    <property type="entry name" value="Epox_hydrolase-like"/>
</dbReference>
<dbReference type="InterPro" id="IPR051340">
    <property type="entry name" value="Haloalkane_dehalogenase"/>
</dbReference>
<dbReference type="InterPro" id="IPR023489">
    <property type="entry name" value="Haloalkane_dehalogenase_1"/>
</dbReference>
<dbReference type="NCBIfam" id="NF002873">
    <property type="entry name" value="PRK03204.1"/>
    <property type="match status" value="1"/>
</dbReference>
<dbReference type="PANTHER" id="PTHR42977:SF3">
    <property type="entry name" value="AB HYDROLASE-1 DOMAIN-CONTAINING PROTEIN"/>
    <property type="match status" value="1"/>
</dbReference>
<dbReference type="PANTHER" id="PTHR42977">
    <property type="entry name" value="HYDROLASE-RELATED"/>
    <property type="match status" value="1"/>
</dbReference>
<dbReference type="Pfam" id="PF00561">
    <property type="entry name" value="Abhydrolase_1"/>
    <property type="match status" value="1"/>
</dbReference>
<dbReference type="PRINTS" id="PR00111">
    <property type="entry name" value="ABHYDROLASE"/>
</dbReference>
<dbReference type="PRINTS" id="PR00412">
    <property type="entry name" value="EPOXHYDRLASE"/>
</dbReference>
<dbReference type="SUPFAM" id="SSF53474">
    <property type="entry name" value="alpha/beta-Hydrolases"/>
    <property type="match status" value="1"/>
</dbReference>
<comment type="function">
    <text evidence="1">Catalyzes hydrolytic cleavage of carbon-halogen bonds in halogenated aliphatic compounds, leading to the formation of the corresponding primary alcohols, halide ions and protons.</text>
</comment>
<comment type="catalytic activity">
    <reaction>
        <text>1-haloalkane + H2O = a halide anion + a primary alcohol + H(+)</text>
        <dbReference type="Rhea" id="RHEA:19081"/>
        <dbReference type="ChEBI" id="CHEBI:15377"/>
        <dbReference type="ChEBI" id="CHEBI:15378"/>
        <dbReference type="ChEBI" id="CHEBI:15734"/>
        <dbReference type="ChEBI" id="CHEBI:16042"/>
        <dbReference type="ChEBI" id="CHEBI:18060"/>
        <dbReference type="EC" id="3.8.1.5"/>
    </reaction>
</comment>
<comment type="subunit">
    <text evidence="1">Monomer.</text>
</comment>
<comment type="similarity">
    <text evidence="3">Belongs to the haloalkane dehalogenase family. Type 1 subfamily.</text>
</comment>
<gene>
    <name type="primary">dhmA2</name>
    <name type="ordered locus">MT1881</name>
</gene>
<organism>
    <name type="scientific">Mycobacterium tuberculosis (strain CDC 1551 / Oshkosh)</name>
    <dbReference type="NCBI Taxonomy" id="83331"/>
    <lineage>
        <taxon>Bacteria</taxon>
        <taxon>Bacillati</taxon>
        <taxon>Actinomycetota</taxon>
        <taxon>Actinomycetes</taxon>
        <taxon>Mycobacteriales</taxon>
        <taxon>Mycobacteriaceae</taxon>
        <taxon>Mycobacterium</taxon>
        <taxon>Mycobacterium tuberculosis complex</taxon>
    </lineage>
</organism>
<keyword id="KW-0378">Hydrolase</keyword>
<keyword id="KW-1185">Reference proteome</keyword>
<accession>P9WMS0</accession>
<accession>L0TAR1</accession>
<accession>P64303</accession>
<accession>Q50600</accession>
<protein>
    <recommendedName>
        <fullName>Haloalkane dehalogenase 2</fullName>
        <ecNumber>3.8.1.5</ecNumber>
    </recommendedName>
</protein>
<evidence type="ECO:0000250" key="1"/>
<evidence type="ECO:0000255" key="2"/>
<evidence type="ECO:0000305" key="3"/>
<name>DHMA2_MYCTO</name>
<proteinExistence type="inferred from homology"/>
<sequence length="286" mass="32151">MSIDFTPDPQLYPFESRWFDSSRGRIHYVDEGTGPPILLCHGNPTWSFLYRDIIVALRDRFRCVAPDYLGFGLSERPSGFGYQIDEHARVIGEFVDHLGLDRYLSMGQDWGGPISMAVAVERADRVRGVVLGNTWFWPADTLAMKAFSRVMSSPPVQYAILRRNFFVERLIPAGTEHRPSSAVMAHYRAVQPNAAARRGVAEMPKQILAARPLLARLAREVPATLGTKPTLLIWGMKDVAFRPKTIIPRLSATFPDHVLVELPNAKHFIQEDAPDRIAAAIIERFG</sequence>
<reference key="1">
    <citation type="journal article" date="2002" name="J. Bacteriol.">
        <title>Whole-genome comparison of Mycobacterium tuberculosis clinical and laboratory strains.</title>
        <authorList>
            <person name="Fleischmann R.D."/>
            <person name="Alland D."/>
            <person name="Eisen J.A."/>
            <person name="Carpenter L."/>
            <person name="White O."/>
            <person name="Peterson J.D."/>
            <person name="DeBoy R.T."/>
            <person name="Dodson R.J."/>
            <person name="Gwinn M.L."/>
            <person name="Haft D.H."/>
            <person name="Hickey E.K."/>
            <person name="Kolonay J.F."/>
            <person name="Nelson W.C."/>
            <person name="Umayam L.A."/>
            <person name="Ermolaeva M.D."/>
            <person name="Salzberg S.L."/>
            <person name="Delcher A."/>
            <person name="Utterback T.R."/>
            <person name="Weidman J.F."/>
            <person name="Khouri H.M."/>
            <person name="Gill J."/>
            <person name="Mikula A."/>
            <person name="Bishai W."/>
            <person name="Jacobs W.R. Jr."/>
            <person name="Venter J.C."/>
            <person name="Fraser C.M."/>
        </authorList>
    </citation>
    <scope>NUCLEOTIDE SEQUENCE [LARGE SCALE GENOMIC DNA]</scope>
    <source>
        <strain>CDC 1551 / Oshkosh</strain>
    </source>
</reference>
<feature type="chain" id="PRO_0000427253" description="Haloalkane dehalogenase 2">
    <location>
        <begin position="1"/>
        <end position="286"/>
    </location>
</feature>
<feature type="domain" description="AB hydrolase-1" evidence="2">
    <location>
        <begin position="35"/>
        <end position="134"/>
    </location>
</feature>
<feature type="active site" description="Nucleophile" evidence="1">
    <location>
        <position position="109"/>
    </location>
</feature>
<feature type="active site" description="Proton donor" evidence="1">
    <location>
        <position position="238"/>
    </location>
</feature>
<feature type="active site" description="Proton acceptor" evidence="1">
    <location>
        <position position="267"/>
    </location>
</feature>